<comment type="function">
    <text evidence="1">DNA-dependent RNA polymerase catalyzes the transcription of DNA into RNA using the four ribonucleoside triphosphates as substrates.</text>
</comment>
<comment type="catalytic activity">
    <reaction evidence="1">
        <text>RNA(n) + a ribonucleoside 5'-triphosphate = RNA(n+1) + diphosphate</text>
        <dbReference type="Rhea" id="RHEA:21248"/>
        <dbReference type="Rhea" id="RHEA-COMP:14527"/>
        <dbReference type="Rhea" id="RHEA-COMP:17342"/>
        <dbReference type="ChEBI" id="CHEBI:33019"/>
        <dbReference type="ChEBI" id="CHEBI:61557"/>
        <dbReference type="ChEBI" id="CHEBI:140395"/>
        <dbReference type="EC" id="2.7.7.6"/>
    </reaction>
</comment>
<comment type="cofactor">
    <cofactor evidence="1">
        <name>Zn(2+)</name>
        <dbReference type="ChEBI" id="CHEBI:29105"/>
    </cofactor>
    <text evidence="1">Binds 1 Zn(2+) ion per subunit.</text>
</comment>
<comment type="subunit">
    <text evidence="1">In cyanobacteria the RNAP catalytic core is composed of 2 alpha, 1 beta, 1 beta', 1 gamma and 1 omega subunit. When a sigma factor is associated with the core the holoenzyme is formed, which can initiate transcription.</text>
</comment>
<comment type="similarity">
    <text evidence="1">Belongs to the RNA polymerase beta' chain family. RpoC2 subfamily.</text>
</comment>
<organism>
    <name type="scientific">Prochlorococcus marinus (strain MIT 9301)</name>
    <dbReference type="NCBI Taxonomy" id="167546"/>
    <lineage>
        <taxon>Bacteria</taxon>
        <taxon>Bacillati</taxon>
        <taxon>Cyanobacteriota</taxon>
        <taxon>Cyanophyceae</taxon>
        <taxon>Synechococcales</taxon>
        <taxon>Prochlorococcaceae</taxon>
        <taxon>Prochlorococcus</taxon>
    </lineage>
</organism>
<sequence>MTSSKPKKTSRVRKTTKNSKKNNPLTMPALAKTPPSFKNKVVDKKALKNLVSWAYKTHGTAVTAAMADNLKDLGFKYATQAAVSISVDDLKVPEAKQDLIGQAEEQISATEECYRLGEITEVERHTKVIDTWTETNERLVDAVKNNFNQNDPLNSVWMMANSGARGNMSQVRQLVGMRGLMANPQGEIIDLPIRTNFREGLTVTEYVISSYGARKGLVDTALRTADSGYLTRRLVDVAQDVIVREEDCGTERSIVVEAEDGKFGARLLGRLTAEDIFDAEENLVVPQNTAIDPALSGEIEKASINKVKIRSPLTCEANRSVCRRCYGWALAHNHLVDLGEAVGIIAAQSIGEPGTQLTMRTFHTGGVSTAESGVVRSKITGKVEFSSKAKVRGYRTPHGVEAKQAEVDFILKIVPQGSNSGKPQKIEVSSGSLLFVEDGEEINSDITVAQIIAGTVKKSVEKATKDVICDLAGQVRYDKVIQPKEVTDRQGNITLKAQRLGRLWVLAGDVYNLPPNARPVISSGKSVDEGTVLAEASQSSEFGGQVRLRESVGDSREVQIVTTSMSLTNFKLIEESTHSGQIYNLESSDGISYRLNISPGSKISNGEVIADLTDERFRTKTGGLVKYAPGLSVKKARSSKNGFEVSQGGTLLWIPQETHEINKDISLLMIEDMKWIEAGTEVVKDIFSQTSGIVTVTQKNDILREITVRNGTFHECDDEEVLNRFTEEGNLVNPGEKILDGVDNKEILFVQKLETPKCRGLLLRTVEEFTIPDQAELPQLSHVKQEKGPHLGLKAIQRLTYKDGELIKSVEGVELLRTHLSIESFDATPQMTIDVESIEDKNDASINRLNLVILESILVRRDTLSDSSHGSTHTELQVKNDQLVKAGDVIATTQILCKEKGFVQLPNVVEDEPIRRLIVEREEDKIKIKISDKAVVKIGDRVVDGDPISKSVKSTSCGEIEEISNSSVTLRLGRPYMVSPDSVLHVKDGDLVLRGDGLALLVFERQKTGDIVQGLPRIEELLEARRPRDSAILSKKSGIVQIKKGNDEESVSLSVIEKDDFVNEYQLLIGKNIMVSDGQQVTGGESLTDGPINPHELLDCYFNDLKDQKPLIEAARESISKLQRSMVSEVQNVYKSQGVAIDDKHIEVIVRQMTSKVRIEDAGDTTLLPGELIELRQVEDTNQAMAITGGAPAEFTPVLLGITKASLNTDSFISAASFQETTRVLTEAAIEGKSDWLRGLKENVIIGRLIPAGTGFSGFVEELSSEAGPHPDILAEESGGYRRAQNLRPDYTVDMPQSPSVSSTAILDDPSDEDLETTRNRHGIDPSSSNFAAFARPNAENQFSEDQLPDPAALEGLQEEGLLSDE</sequence>
<dbReference type="EC" id="2.7.7.6" evidence="1"/>
<dbReference type="EMBL" id="CP000576">
    <property type="protein sequence ID" value="ABO18297.1"/>
    <property type="molecule type" value="Genomic_DNA"/>
</dbReference>
<dbReference type="RefSeq" id="WP_011863594.1">
    <property type="nucleotide sequence ID" value="NC_009091.1"/>
</dbReference>
<dbReference type="SMR" id="A3PEX2"/>
<dbReference type="STRING" id="167546.P9301_16741"/>
<dbReference type="KEGG" id="pmg:P9301_16741"/>
<dbReference type="eggNOG" id="COG0086">
    <property type="taxonomic scope" value="Bacteria"/>
</dbReference>
<dbReference type="HOGENOM" id="CLU_000524_1_0_3"/>
<dbReference type="OrthoDB" id="9815296at2"/>
<dbReference type="Proteomes" id="UP000001430">
    <property type="component" value="Chromosome"/>
</dbReference>
<dbReference type="GO" id="GO:0000428">
    <property type="term" value="C:DNA-directed RNA polymerase complex"/>
    <property type="evidence" value="ECO:0007669"/>
    <property type="project" value="UniProtKB-KW"/>
</dbReference>
<dbReference type="GO" id="GO:0003677">
    <property type="term" value="F:DNA binding"/>
    <property type="evidence" value="ECO:0007669"/>
    <property type="project" value="UniProtKB-UniRule"/>
</dbReference>
<dbReference type="GO" id="GO:0003899">
    <property type="term" value="F:DNA-directed RNA polymerase activity"/>
    <property type="evidence" value="ECO:0007669"/>
    <property type="project" value="UniProtKB-UniRule"/>
</dbReference>
<dbReference type="GO" id="GO:0008270">
    <property type="term" value="F:zinc ion binding"/>
    <property type="evidence" value="ECO:0007669"/>
    <property type="project" value="UniProtKB-UniRule"/>
</dbReference>
<dbReference type="GO" id="GO:0006351">
    <property type="term" value="P:DNA-templated transcription"/>
    <property type="evidence" value="ECO:0007669"/>
    <property type="project" value="UniProtKB-UniRule"/>
</dbReference>
<dbReference type="CDD" id="cd02655">
    <property type="entry name" value="RNAP_beta'_C"/>
    <property type="match status" value="1"/>
</dbReference>
<dbReference type="FunFam" id="1.10.150.390:FF:000002">
    <property type="entry name" value="DNA-directed RNA polymerase subunit beta"/>
    <property type="match status" value="1"/>
</dbReference>
<dbReference type="Gene3D" id="1.10.132.30">
    <property type="match status" value="1"/>
</dbReference>
<dbReference type="Gene3D" id="1.10.150.390">
    <property type="match status" value="1"/>
</dbReference>
<dbReference type="Gene3D" id="1.10.1790.20">
    <property type="match status" value="1"/>
</dbReference>
<dbReference type="Gene3D" id="2.40.50.100">
    <property type="match status" value="1"/>
</dbReference>
<dbReference type="Gene3D" id="1.10.274.100">
    <property type="entry name" value="RNA polymerase Rpb1, domain 3"/>
    <property type="match status" value="1"/>
</dbReference>
<dbReference type="HAMAP" id="MF_01324">
    <property type="entry name" value="RNApol_bact_RpoC2"/>
    <property type="match status" value="1"/>
</dbReference>
<dbReference type="InterPro" id="IPR012756">
    <property type="entry name" value="DNA-dir_RpoC2_beta_pp"/>
</dbReference>
<dbReference type="InterPro" id="IPR045867">
    <property type="entry name" value="DNA-dir_RpoC_beta_prime"/>
</dbReference>
<dbReference type="InterPro" id="IPR007066">
    <property type="entry name" value="RNA_pol_Rpb1_3"/>
</dbReference>
<dbReference type="InterPro" id="IPR042102">
    <property type="entry name" value="RNA_pol_Rpb1_3_sf"/>
</dbReference>
<dbReference type="InterPro" id="IPR007083">
    <property type="entry name" value="RNA_pol_Rpb1_4"/>
</dbReference>
<dbReference type="InterPro" id="IPR007081">
    <property type="entry name" value="RNA_pol_Rpb1_5"/>
</dbReference>
<dbReference type="InterPro" id="IPR038120">
    <property type="entry name" value="Rpb1_funnel_sf"/>
</dbReference>
<dbReference type="NCBIfam" id="NF002724">
    <property type="entry name" value="PRK02597.1"/>
    <property type="match status" value="1"/>
</dbReference>
<dbReference type="NCBIfam" id="TIGR02388">
    <property type="entry name" value="rpoC2_cyan"/>
    <property type="match status" value="1"/>
</dbReference>
<dbReference type="PANTHER" id="PTHR19376">
    <property type="entry name" value="DNA-DIRECTED RNA POLYMERASE"/>
    <property type="match status" value="1"/>
</dbReference>
<dbReference type="Pfam" id="PF04983">
    <property type="entry name" value="RNA_pol_Rpb1_3"/>
    <property type="match status" value="1"/>
</dbReference>
<dbReference type="Pfam" id="PF05000">
    <property type="entry name" value="RNA_pol_Rpb1_4"/>
    <property type="match status" value="1"/>
</dbReference>
<dbReference type="Pfam" id="PF04998">
    <property type="entry name" value="RNA_pol_Rpb1_5"/>
    <property type="match status" value="1"/>
</dbReference>
<dbReference type="SUPFAM" id="SSF64484">
    <property type="entry name" value="beta and beta-prime subunits of DNA dependent RNA-polymerase"/>
    <property type="match status" value="1"/>
</dbReference>
<reference key="1">
    <citation type="journal article" date="2007" name="PLoS Genet.">
        <title>Patterns and implications of gene gain and loss in the evolution of Prochlorococcus.</title>
        <authorList>
            <person name="Kettler G.C."/>
            <person name="Martiny A.C."/>
            <person name="Huang K."/>
            <person name="Zucker J."/>
            <person name="Coleman M.L."/>
            <person name="Rodrigue S."/>
            <person name="Chen F."/>
            <person name="Lapidus A."/>
            <person name="Ferriera S."/>
            <person name="Johnson J."/>
            <person name="Steglich C."/>
            <person name="Church G.M."/>
            <person name="Richardson P."/>
            <person name="Chisholm S.W."/>
        </authorList>
    </citation>
    <scope>NUCLEOTIDE SEQUENCE [LARGE SCALE GENOMIC DNA]</scope>
    <source>
        <strain>MIT 9301</strain>
    </source>
</reference>
<proteinExistence type="inferred from homology"/>
<gene>
    <name evidence="1" type="primary">rpoC2</name>
    <name type="ordered locus">P9301_16741</name>
</gene>
<name>RPOC2_PROM0</name>
<evidence type="ECO:0000255" key="1">
    <source>
        <dbReference type="HAMAP-Rule" id="MF_01324"/>
    </source>
</evidence>
<evidence type="ECO:0000256" key="2">
    <source>
        <dbReference type="SAM" id="MobiDB-lite"/>
    </source>
</evidence>
<keyword id="KW-0240">DNA-directed RNA polymerase</keyword>
<keyword id="KW-0479">Metal-binding</keyword>
<keyword id="KW-0548">Nucleotidyltransferase</keyword>
<keyword id="KW-1185">Reference proteome</keyword>
<keyword id="KW-0804">Transcription</keyword>
<keyword id="KW-0808">Transferase</keyword>
<keyword id="KW-0862">Zinc</keyword>
<protein>
    <recommendedName>
        <fullName evidence="1">DNA-directed RNA polymerase subunit beta'</fullName>
        <shortName evidence="1">RNAP subunit beta'</shortName>
        <ecNumber evidence="1">2.7.7.6</ecNumber>
    </recommendedName>
    <alternativeName>
        <fullName evidence="1">RNA polymerase subunit beta'</fullName>
    </alternativeName>
    <alternativeName>
        <fullName evidence="1">Transcriptase subunit beta'</fullName>
    </alternativeName>
</protein>
<feature type="chain" id="PRO_0000353527" description="DNA-directed RNA polymerase subunit beta'">
    <location>
        <begin position="1"/>
        <end position="1366"/>
    </location>
</feature>
<feature type="region of interest" description="Disordered" evidence="2">
    <location>
        <begin position="1"/>
        <end position="34"/>
    </location>
</feature>
<feature type="region of interest" description="Disordered" evidence="2">
    <location>
        <begin position="1291"/>
        <end position="1366"/>
    </location>
</feature>
<feature type="compositionally biased region" description="Basic residues" evidence="2">
    <location>
        <begin position="1"/>
        <end position="20"/>
    </location>
</feature>
<feature type="compositionally biased region" description="Polar residues" evidence="2">
    <location>
        <begin position="1295"/>
        <end position="1305"/>
    </location>
</feature>
<feature type="compositionally biased region" description="Low complexity" evidence="2">
    <location>
        <begin position="1354"/>
        <end position="1366"/>
    </location>
</feature>
<feature type="binding site" evidence="1">
    <location>
        <position position="248"/>
    </location>
    <ligand>
        <name>Zn(2+)</name>
        <dbReference type="ChEBI" id="CHEBI:29105"/>
    </ligand>
</feature>
<feature type="binding site" evidence="1">
    <location>
        <position position="315"/>
    </location>
    <ligand>
        <name>Zn(2+)</name>
        <dbReference type="ChEBI" id="CHEBI:29105"/>
    </ligand>
</feature>
<feature type="binding site" evidence="1">
    <location>
        <position position="322"/>
    </location>
    <ligand>
        <name>Zn(2+)</name>
        <dbReference type="ChEBI" id="CHEBI:29105"/>
    </ligand>
</feature>
<feature type="binding site" evidence="1">
    <location>
        <position position="325"/>
    </location>
    <ligand>
        <name>Zn(2+)</name>
        <dbReference type="ChEBI" id="CHEBI:29105"/>
    </ligand>
</feature>
<accession>A3PEX2</accession>